<feature type="chain" id="PRO_0000333013" description="GTPase IMAP family member 6">
    <location>
        <begin position="1"/>
        <end position="304"/>
    </location>
</feature>
<feature type="domain" description="AIG1-type G" evidence="4">
    <location>
        <begin position="100"/>
        <end position="301"/>
    </location>
</feature>
<feature type="region of interest" description="Disordered" evidence="5">
    <location>
        <begin position="39"/>
        <end position="86"/>
    </location>
</feature>
<feature type="region of interest" description="G1" evidence="4">
    <location>
        <begin position="109"/>
        <end position="116"/>
    </location>
</feature>
<feature type="region of interest" description="G2" evidence="4">
    <location>
        <begin position="136"/>
        <end position="140"/>
    </location>
</feature>
<feature type="region of interest" description="G3" evidence="4">
    <location>
        <begin position="157"/>
        <end position="160"/>
    </location>
</feature>
<feature type="region of interest" description="G4" evidence="4">
    <location>
        <begin position="224"/>
        <end position="227"/>
    </location>
</feature>
<feature type="region of interest" description="G5" evidence="4">
    <location>
        <begin position="261"/>
        <end position="263"/>
    </location>
</feature>
<feature type="compositionally biased region" description="Polar residues" evidence="5">
    <location>
        <begin position="43"/>
        <end position="59"/>
    </location>
</feature>
<feature type="binding site" evidence="2">
    <location>
        <begin position="109"/>
        <end position="117"/>
    </location>
    <ligand>
        <name>GTP</name>
        <dbReference type="ChEBI" id="CHEBI:37565"/>
    </ligand>
</feature>
<feature type="binding site" evidence="3">
    <location>
        <position position="130"/>
    </location>
    <ligand>
        <name>GTP</name>
        <dbReference type="ChEBI" id="CHEBI:37565"/>
    </ligand>
</feature>
<feature type="binding site" evidence="2">
    <location>
        <begin position="225"/>
        <end position="227"/>
    </location>
    <ligand>
        <name>GTP</name>
        <dbReference type="ChEBI" id="CHEBI:37565"/>
    </ligand>
</feature>
<feature type="binding site" evidence="2">
    <location>
        <position position="262"/>
    </location>
    <ligand>
        <name>GTP</name>
        <dbReference type="ChEBI" id="CHEBI:37565"/>
    </ligand>
</feature>
<gene>
    <name type="primary">Gimap6</name>
    <name type="synonym">Ian6</name>
</gene>
<proteinExistence type="evidence at transcript level"/>
<comment type="subcellular location">
    <subcellularLocation>
        <location evidence="1">Cytoplasm</location>
        <location evidence="1">Cytosol</location>
    </subcellularLocation>
</comment>
<comment type="tissue specificity">
    <text evidence="6">Expressed in B and T-cells and peritoneal macrophages.</text>
</comment>
<comment type="similarity">
    <text evidence="7">Belongs to the TRAFAC class TrmE-Era-EngA-EngB-Septin-like GTPase superfamily. AIG1/Toc34/Toc159-like paraseptin GTPase family. IAN subfamily.</text>
</comment>
<evidence type="ECO:0000250" key="1">
    <source>
        <dbReference type="UniProtKB" id="Q6P9H5"/>
    </source>
</evidence>
<evidence type="ECO:0000250" key="2">
    <source>
        <dbReference type="UniProtKB" id="Q8WWP7"/>
    </source>
</evidence>
<evidence type="ECO:0000250" key="3">
    <source>
        <dbReference type="UniProtKB" id="Q9UG22"/>
    </source>
</evidence>
<evidence type="ECO:0000255" key="4">
    <source>
        <dbReference type="PROSITE-ProRule" id="PRU01057"/>
    </source>
</evidence>
<evidence type="ECO:0000256" key="5">
    <source>
        <dbReference type="SAM" id="MobiDB-lite"/>
    </source>
</evidence>
<evidence type="ECO:0000269" key="6">
    <source>
    </source>
</evidence>
<evidence type="ECO:0000305" key="7"/>
<protein>
    <recommendedName>
        <fullName>GTPase IMAP family member 6</fullName>
    </recommendedName>
    <alternativeName>
        <fullName>Immunity-associated nucleotide 6 protein</fullName>
        <shortName>IAN-6</shortName>
    </alternativeName>
</protein>
<keyword id="KW-0963">Cytoplasm</keyword>
<keyword id="KW-0342">GTP-binding</keyword>
<keyword id="KW-0547">Nucleotide-binding</keyword>
<keyword id="KW-1185">Reference proteome</keyword>
<reference key="1">
    <citation type="journal article" date="2005" name="Int. Immunol.">
        <title>Expression of the Ian family of putative GTPases during T cell development and description of an Ian with three sets of GTP/GDP-binding motifs.</title>
        <authorList>
            <person name="Dion C."/>
            <person name="Carter C."/>
            <person name="Hepburn L."/>
            <person name="Coadwell W.J."/>
            <person name="Morgan G."/>
            <person name="Graham M."/>
            <person name="Pugh N."/>
            <person name="Anderson G."/>
            <person name="Butcher G.W."/>
            <person name="Miller J.R."/>
        </authorList>
    </citation>
    <scope>NUCLEOTIDE SEQUENCE [MRNA]</scope>
    <scope>TISSUE SPECIFICITY</scope>
    <source>
        <strain>Brown Norway</strain>
    </source>
</reference>
<reference key="2">
    <citation type="submission" date="2005-07" db="EMBL/GenBank/DDBJ databases">
        <title>Expression of the gimap gene cluster is reduced in the type 1 diabetes BB lymphopenic rat.</title>
        <authorList>
            <person name="Rutledge E.A."/>
            <person name="Van Yserloo B."/>
            <person name="Fuller J.M."/>
            <person name="Moralejo D.H."/>
            <person name="Ettinger R.A."/>
            <person name="Gaur P."/>
            <person name="Peterson M.R."/>
            <person name="Hoehna J.L."/>
            <person name="Lernmark A."/>
        </authorList>
    </citation>
    <scope>NUCLEOTIDE SEQUENCE [MRNA]</scope>
</reference>
<reference key="3">
    <citation type="journal article" date="2004" name="Genome Res.">
        <title>The status, quality, and expansion of the NIH full-length cDNA project: the Mammalian Gene Collection (MGC).</title>
        <authorList>
            <consortium name="The MGC Project Team"/>
        </authorList>
    </citation>
    <scope>NUCLEOTIDE SEQUENCE [LARGE SCALE MRNA]</scope>
    <source>
        <tissue>Thymus</tissue>
    </source>
</reference>
<dbReference type="EMBL" id="AJ633683">
    <property type="protein sequence ID" value="CAG17878.1"/>
    <property type="molecule type" value="mRNA"/>
</dbReference>
<dbReference type="EMBL" id="DQ125342">
    <property type="protein sequence ID" value="ABB03711.1"/>
    <property type="molecule type" value="mRNA"/>
</dbReference>
<dbReference type="EMBL" id="DQ125343">
    <property type="protein sequence ID" value="ABB03704.1"/>
    <property type="molecule type" value="mRNA"/>
</dbReference>
<dbReference type="EMBL" id="BC089859">
    <property type="protein sequence ID" value="AAH89859.1"/>
    <property type="molecule type" value="mRNA"/>
</dbReference>
<dbReference type="RefSeq" id="NP_001011968.1">
    <property type="nucleotide sequence ID" value="NM_001011968.3"/>
</dbReference>
<dbReference type="SMR" id="Q5FVN6"/>
<dbReference type="FunCoup" id="Q5FVN6">
    <property type="interactions" value="27"/>
</dbReference>
<dbReference type="STRING" id="10116.ENSRNOP00000047855"/>
<dbReference type="PhosphoSitePlus" id="Q5FVN6"/>
<dbReference type="PaxDb" id="10116-ENSRNOP00000047855"/>
<dbReference type="Ensembl" id="ENSRNOT00000049038.5">
    <property type="protein sequence ID" value="ENSRNOP00000047855.3"/>
    <property type="gene ID" value="ENSRNOG00000033338.5"/>
</dbReference>
<dbReference type="GeneID" id="297076"/>
<dbReference type="KEGG" id="rno:297076"/>
<dbReference type="UCSC" id="RGD:1305041">
    <property type="organism name" value="rat"/>
</dbReference>
<dbReference type="AGR" id="RGD:1305041"/>
<dbReference type="CTD" id="474344"/>
<dbReference type="RGD" id="1305041">
    <property type="gene designation" value="Gimap6"/>
</dbReference>
<dbReference type="eggNOG" id="ENOG502R7PE">
    <property type="taxonomic scope" value="Eukaryota"/>
</dbReference>
<dbReference type="GeneTree" id="ENSGT00940000162548"/>
<dbReference type="HOGENOM" id="CLU_956336_0_0_1"/>
<dbReference type="InParanoid" id="Q5FVN6"/>
<dbReference type="OMA" id="WENEGCC"/>
<dbReference type="OrthoDB" id="8954335at2759"/>
<dbReference type="PhylomeDB" id="Q5FVN6"/>
<dbReference type="TreeFam" id="TF330845"/>
<dbReference type="PRO" id="PR:Q5FVN6"/>
<dbReference type="Proteomes" id="UP000002494">
    <property type="component" value="Chromosome 4"/>
</dbReference>
<dbReference type="Bgee" id="ENSRNOG00000033338">
    <property type="expression patterns" value="Expressed in thymus and 17 other cell types or tissues"/>
</dbReference>
<dbReference type="GO" id="GO:0005829">
    <property type="term" value="C:cytosol"/>
    <property type="evidence" value="ECO:0000250"/>
    <property type="project" value="UniProtKB"/>
</dbReference>
<dbReference type="GO" id="GO:0005525">
    <property type="term" value="F:GTP binding"/>
    <property type="evidence" value="ECO:0007669"/>
    <property type="project" value="UniProtKB-KW"/>
</dbReference>
<dbReference type="GO" id="GO:0006914">
    <property type="term" value="P:autophagy"/>
    <property type="evidence" value="ECO:0000266"/>
    <property type="project" value="RGD"/>
</dbReference>
<dbReference type="GO" id="GO:0045454">
    <property type="term" value="P:cell redox homeostasis"/>
    <property type="evidence" value="ECO:0000266"/>
    <property type="project" value="RGD"/>
</dbReference>
<dbReference type="GO" id="GO:0042742">
    <property type="term" value="P:defense response to bacterium"/>
    <property type="evidence" value="ECO:0000266"/>
    <property type="project" value="RGD"/>
</dbReference>
<dbReference type="GO" id="GO:0006955">
    <property type="term" value="P:immune response"/>
    <property type="evidence" value="ECO:0000266"/>
    <property type="project" value="RGD"/>
</dbReference>
<dbReference type="GO" id="GO:0001822">
    <property type="term" value="P:kidney development"/>
    <property type="evidence" value="ECO:0000266"/>
    <property type="project" value="RGD"/>
</dbReference>
<dbReference type="GO" id="GO:0006629">
    <property type="term" value="P:lipid metabolic process"/>
    <property type="evidence" value="ECO:0000266"/>
    <property type="project" value="RGD"/>
</dbReference>
<dbReference type="GO" id="GO:0034341">
    <property type="term" value="P:response to type II interferon"/>
    <property type="evidence" value="ECO:0000266"/>
    <property type="project" value="RGD"/>
</dbReference>
<dbReference type="CDD" id="cd01852">
    <property type="entry name" value="AIG1"/>
    <property type="match status" value="1"/>
</dbReference>
<dbReference type="FunFam" id="3.40.50.300:FF:000366">
    <property type="entry name" value="GTPase, IMAP family member 2"/>
    <property type="match status" value="1"/>
</dbReference>
<dbReference type="Gene3D" id="3.40.50.300">
    <property type="entry name" value="P-loop containing nucleotide triphosphate hydrolases"/>
    <property type="match status" value="1"/>
</dbReference>
<dbReference type="InterPro" id="IPR006703">
    <property type="entry name" value="G_AIG1"/>
</dbReference>
<dbReference type="InterPro" id="IPR045058">
    <property type="entry name" value="GIMA/IAN/Toc"/>
</dbReference>
<dbReference type="InterPro" id="IPR027417">
    <property type="entry name" value="P-loop_NTPase"/>
</dbReference>
<dbReference type="PANTHER" id="PTHR10903:SF144">
    <property type="entry name" value="GTPASE IMAP FAMILY MEMBER 6"/>
    <property type="match status" value="1"/>
</dbReference>
<dbReference type="PANTHER" id="PTHR10903">
    <property type="entry name" value="GTPASE, IMAP FAMILY MEMBER-RELATED"/>
    <property type="match status" value="1"/>
</dbReference>
<dbReference type="Pfam" id="PF04548">
    <property type="entry name" value="AIG1"/>
    <property type="match status" value="1"/>
</dbReference>
<dbReference type="SUPFAM" id="SSF52540">
    <property type="entry name" value="P-loop containing nucleoside triphosphate hydrolases"/>
    <property type="match status" value="1"/>
</dbReference>
<dbReference type="PROSITE" id="PS51720">
    <property type="entry name" value="G_AIG1"/>
    <property type="match status" value="1"/>
</dbReference>
<organism>
    <name type="scientific">Rattus norvegicus</name>
    <name type="common">Rat</name>
    <dbReference type="NCBI Taxonomy" id="10116"/>
    <lineage>
        <taxon>Eukaryota</taxon>
        <taxon>Metazoa</taxon>
        <taxon>Chordata</taxon>
        <taxon>Craniata</taxon>
        <taxon>Vertebrata</taxon>
        <taxon>Euteleostomi</taxon>
        <taxon>Mammalia</taxon>
        <taxon>Eutheria</taxon>
        <taxon>Euarchontoglires</taxon>
        <taxon>Glires</taxon>
        <taxon>Rodentia</taxon>
        <taxon>Myomorpha</taxon>
        <taxon>Muroidea</taxon>
        <taxon>Muridae</taxon>
        <taxon>Murinae</taxon>
        <taxon>Rattus</taxon>
    </lineage>
</organism>
<name>GIMA6_RAT</name>
<sequence length="304" mass="33691">MNWLYSKTLGSIGSCCIDTLPWPFHSFFQRNLLALPGEPGNPLESSATESGKQSRSCLSASPVMEEEGCEHSLQKNPTRQLPLDPGQELTKDLKEKKLTPKRLQLLLVGKTGSGKSATGNSILGRQVFESKISARPVTMAFQKGSRELEGKELEVIDTPDILSPQNQPEATAKKICDILASPGPHAVLLVIQVGRYTTEDQEAARCLQEIFGNGILAYTILVFTRKEELAEGSLEEYIKENNNKTLDALDVACERRHCGFNNRAQGDEQEAQLQKLMEEIESILWENEGHCYTMELPNVSSKTL</sequence>
<accession>Q5FVN6</accession>